<dbReference type="EC" id="4.1.1.37" evidence="1"/>
<dbReference type="EMBL" id="CP000911">
    <property type="protein sequence ID" value="ABY38918.1"/>
    <property type="molecule type" value="Genomic_DNA"/>
</dbReference>
<dbReference type="RefSeq" id="WP_002965130.1">
    <property type="nucleotide sequence ID" value="NC_010169.1"/>
</dbReference>
<dbReference type="SMR" id="B0CJG6"/>
<dbReference type="GeneID" id="93017623"/>
<dbReference type="KEGG" id="bmt:BSUIS_A1907"/>
<dbReference type="HOGENOM" id="CLU_040933_0_0_5"/>
<dbReference type="UniPathway" id="UPA00251">
    <property type="reaction ID" value="UER00321"/>
</dbReference>
<dbReference type="Proteomes" id="UP000008545">
    <property type="component" value="Chromosome I"/>
</dbReference>
<dbReference type="GO" id="GO:0005829">
    <property type="term" value="C:cytosol"/>
    <property type="evidence" value="ECO:0007669"/>
    <property type="project" value="TreeGrafter"/>
</dbReference>
<dbReference type="GO" id="GO:0004853">
    <property type="term" value="F:uroporphyrinogen decarboxylase activity"/>
    <property type="evidence" value="ECO:0007669"/>
    <property type="project" value="UniProtKB-UniRule"/>
</dbReference>
<dbReference type="GO" id="GO:0019353">
    <property type="term" value="P:protoporphyrinogen IX biosynthetic process from glutamate"/>
    <property type="evidence" value="ECO:0007669"/>
    <property type="project" value="TreeGrafter"/>
</dbReference>
<dbReference type="CDD" id="cd00717">
    <property type="entry name" value="URO-D"/>
    <property type="match status" value="1"/>
</dbReference>
<dbReference type="FunFam" id="3.20.20.210:FF:000007">
    <property type="entry name" value="Uroporphyrinogen decarboxylase"/>
    <property type="match status" value="1"/>
</dbReference>
<dbReference type="Gene3D" id="3.20.20.210">
    <property type="match status" value="1"/>
</dbReference>
<dbReference type="HAMAP" id="MF_00218">
    <property type="entry name" value="URO_D"/>
    <property type="match status" value="1"/>
</dbReference>
<dbReference type="InterPro" id="IPR038071">
    <property type="entry name" value="UROD/MetE-like_sf"/>
</dbReference>
<dbReference type="InterPro" id="IPR006361">
    <property type="entry name" value="Uroporphyrinogen_deCO2ase_HemE"/>
</dbReference>
<dbReference type="InterPro" id="IPR000257">
    <property type="entry name" value="Uroporphyrinogen_deCOase"/>
</dbReference>
<dbReference type="NCBIfam" id="TIGR01464">
    <property type="entry name" value="hemE"/>
    <property type="match status" value="1"/>
</dbReference>
<dbReference type="PANTHER" id="PTHR21091">
    <property type="entry name" value="METHYLTETRAHYDROFOLATE:HOMOCYSTEINE METHYLTRANSFERASE RELATED"/>
    <property type="match status" value="1"/>
</dbReference>
<dbReference type="PANTHER" id="PTHR21091:SF169">
    <property type="entry name" value="UROPORPHYRINOGEN DECARBOXYLASE"/>
    <property type="match status" value="1"/>
</dbReference>
<dbReference type="Pfam" id="PF01208">
    <property type="entry name" value="URO-D"/>
    <property type="match status" value="1"/>
</dbReference>
<dbReference type="SUPFAM" id="SSF51726">
    <property type="entry name" value="UROD/MetE-like"/>
    <property type="match status" value="1"/>
</dbReference>
<dbReference type="PROSITE" id="PS00906">
    <property type="entry name" value="UROD_1"/>
    <property type="match status" value="1"/>
</dbReference>
<dbReference type="PROSITE" id="PS00907">
    <property type="entry name" value="UROD_2"/>
    <property type="match status" value="1"/>
</dbReference>
<protein>
    <recommendedName>
        <fullName evidence="1">Uroporphyrinogen decarboxylase</fullName>
        <shortName evidence="1">UPD</shortName>
        <shortName evidence="1">URO-D</shortName>
        <ecNumber evidence="1">4.1.1.37</ecNumber>
    </recommendedName>
</protein>
<sequence length="341" mass="37831">MNRKVLKVIDGETVFPPPIWMMRQAGRYLPEYRETRKKAGSFLDLCYSPDLAVEVTLQPIRRFGFDAAILFSDILVVPHALGRDLRFEEGKGPLMTPIDADEIFWLETEGVAKRLEPVYETVRLVREQLPDETTLLGFCGAPWTVATYMIAGHGTPDQAPARLFAYRFPEAFEKLLNDLADVSAEYLIEQLGAGADAVQIFDSWSGVLDEDCFERFCIRPVARIVQKVRAVYPQARIIGFPKGAGMLYAGYREKTGVDMLGLDWSVPLSFAALLQEEGAVQGNLDPLRVVAGGNALDEGVDAILERMGQGPLVFNLGHGITPQAPIENVQRMIDRVRGGKS</sequence>
<accession>B0CJG6</accession>
<organism>
    <name type="scientific">Brucella suis (strain ATCC 23445 / NCTC 10510)</name>
    <dbReference type="NCBI Taxonomy" id="470137"/>
    <lineage>
        <taxon>Bacteria</taxon>
        <taxon>Pseudomonadati</taxon>
        <taxon>Pseudomonadota</taxon>
        <taxon>Alphaproteobacteria</taxon>
        <taxon>Hyphomicrobiales</taxon>
        <taxon>Brucellaceae</taxon>
        <taxon>Brucella/Ochrobactrum group</taxon>
        <taxon>Brucella</taxon>
    </lineage>
</organism>
<feature type="chain" id="PRO_1000078067" description="Uroporphyrinogen decarboxylase">
    <location>
        <begin position="1"/>
        <end position="341"/>
    </location>
</feature>
<feature type="binding site" evidence="1">
    <location>
        <begin position="23"/>
        <end position="27"/>
    </location>
    <ligand>
        <name>substrate</name>
    </ligand>
</feature>
<feature type="binding site" evidence="1">
    <location>
        <position position="73"/>
    </location>
    <ligand>
        <name>substrate</name>
    </ligand>
</feature>
<feature type="binding site" evidence="1">
    <location>
        <position position="148"/>
    </location>
    <ligand>
        <name>substrate</name>
    </ligand>
</feature>
<feature type="binding site" evidence="1">
    <location>
        <position position="203"/>
    </location>
    <ligand>
        <name>substrate</name>
    </ligand>
</feature>
<feature type="binding site" evidence="1">
    <location>
        <position position="318"/>
    </location>
    <ligand>
        <name>substrate</name>
    </ligand>
</feature>
<feature type="site" description="Transition state stabilizer" evidence="1">
    <location>
        <position position="73"/>
    </location>
</feature>
<name>DCUP_BRUSI</name>
<keyword id="KW-0963">Cytoplasm</keyword>
<keyword id="KW-0210">Decarboxylase</keyword>
<keyword id="KW-0456">Lyase</keyword>
<keyword id="KW-0627">Porphyrin biosynthesis</keyword>
<proteinExistence type="inferred from homology"/>
<gene>
    <name evidence="1" type="primary">hemE</name>
    <name type="ordered locus">BSUIS_A1907</name>
</gene>
<comment type="function">
    <text evidence="1">Catalyzes the decarboxylation of four acetate groups of uroporphyrinogen-III to yield coproporphyrinogen-III.</text>
</comment>
<comment type="catalytic activity">
    <reaction evidence="1">
        <text>uroporphyrinogen III + 4 H(+) = coproporphyrinogen III + 4 CO2</text>
        <dbReference type="Rhea" id="RHEA:19865"/>
        <dbReference type="ChEBI" id="CHEBI:15378"/>
        <dbReference type="ChEBI" id="CHEBI:16526"/>
        <dbReference type="ChEBI" id="CHEBI:57308"/>
        <dbReference type="ChEBI" id="CHEBI:57309"/>
        <dbReference type="EC" id="4.1.1.37"/>
    </reaction>
</comment>
<comment type="pathway">
    <text evidence="1">Porphyrin-containing compound metabolism; protoporphyrin-IX biosynthesis; coproporphyrinogen-III from 5-aminolevulinate: step 4/4.</text>
</comment>
<comment type="subunit">
    <text evidence="1">Homodimer.</text>
</comment>
<comment type="subcellular location">
    <subcellularLocation>
        <location evidence="1">Cytoplasm</location>
    </subcellularLocation>
</comment>
<comment type="similarity">
    <text evidence="1">Belongs to the uroporphyrinogen decarboxylase family.</text>
</comment>
<evidence type="ECO:0000255" key="1">
    <source>
        <dbReference type="HAMAP-Rule" id="MF_00218"/>
    </source>
</evidence>
<reference key="1">
    <citation type="submission" date="2007-12" db="EMBL/GenBank/DDBJ databases">
        <title>Brucella suis ATCC 23445 whole genome shotgun sequencing project.</title>
        <authorList>
            <person name="Setubal J.C."/>
            <person name="Bowns C."/>
            <person name="Boyle S."/>
            <person name="Crasta O.R."/>
            <person name="Czar M.J."/>
            <person name="Dharmanolla C."/>
            <person name="Gillespie J.J."/>
            <person name="Kenyon R.W."/>
            <person name="Lu J."/>
            <person name="Mane S."/>
            <person name="Mohapatra S."/>
            <person name="Nagrani S."/>
            <person name="Purkayastha A."/>
            <person name="Rajasimha H.K."/>
            <person name="Shallom J.M."/>
            <person name="Shallom S."/>
            <person name="Shukla M."/>
            <person name="Snyder E.E."/>
            <person name="Sobral B.W."/>
            <person name="Wattam A.R."/>
            <person name="Will R."/>
            <person name="Williams K."/>
            <person name="Yoo H."/>
            <person name="Bruce D."/>
            <person name="Detter C."/>
            <person name="Munk C."/>
            <person name="Brettin T.S."/>
        </authorList>
    </citation>
    <scope>NUCLEOTIDE SEQUENCE [LARGE SCALE GENOMIC DNA]</scope>
    <source>
        <strain>ATCC 23445 / NCTC 10510</strain>
    </source>
</reference>